<evidence type="ECO:0000255" key="1"/>
<evidence type="ECO:0000255" key="2">
    <source>
        <dbReference type="PROSITE-ProRule" id="PRU00132"/>
    </source>
</evidence>
<evidence type="ECO:0000256" key="3">
    <source>
        <dbReference type="SAM" id="MobiDB-lite"/>
    </source>
</evidence>
<evidence type="ECO:0000269" key="4">
    <source>
    </source>
</evidence>
<evidence type="ECO:0000269" key="5">
    <source>
    </source>
</evidence>
<evidence type="ECO:0000269" key="6">
    <source>
    </source>
</evidence>
<evidence type="ECO:0000269" key="7">
    <source>
    </source>
</evidence>
<evidence type="ECO:0000269" key="8">
    <source>
    </source>
</evidence>
<evidence type="ECO:0000269" key="9">
    <source>
    </source>
</evidence>
<evidence type="ECO:0000269" key="10">
    <source>
    </source>
</evidence>
<evidence type="ECO:0000269" key="11">
    <source>
    </source>
</evidence>
<evidence type="ECO:0000269" key="12">
    <source>
    </source>
</evidence>
<evidence type="ECO:0000269" key="13">
    <source ref="5"/>
</evidence>
<evidence type="ECO:0000303" key="14">
    <source>
    </source>
</evidence>
<evidence type="ECO:0000305" key="15"/>
<evidence type="ECO:0007744" key="16">
    <source>
    </source>
</evidence>
<evidence type="ECO:0007744" key="17">
    <source>
    </source>
</evidence>
<evidence type="ECO:0007829" key="18">
    <source>
        <dbReference type="PDB" id="6LP4"/>
    </source>
</evidence>
<accession>P40075</accession>
<accession>D3DM26</accession>
<gene>
    <name evidence="14" type="primary">SCS2</name>
    <name type="ordered locus">YER120W</name>
</gene>
<feature type="initiator methionine" description="Removed" evidence="13">
    <location>
        <position position="1"/>
    </location>
</feature>
<feature type="chain" id="PRO_0000213467" description="Vesicle-associated membrane protein-associated protein SCS2">
    <location>
        <begin position="2"/>
        <end position="244"/>
    </location>
</feature>
<feature type="topological domain" description="Cytoplasmic" evidence="1">
    <location>
        <begin position="2"/>
        <end position="222"/>
    </location>
</feature>
<feature type="transmembrane region" description="Helical; Anchor for type IV membrane protein" evidence="1">
    <location>
        <begin position="223"/>
        <end position="243"/>
    </location>
</feature>
<feature type="topological domain" description="Lumenal" evidence="1">
    <location>
        <position position="244"/>
    </location>
</feature>
<feature type="domain" description="MSP" evidence="2">
    <location>
        <begin position="3"/>
        <end position="126"/>
    </location>
</feature>
<feature type="region of interest" description="Disordered" evidence="3">
    <location>
        <begin position="135"/>
        <end position="219"/>
    </location>
</feature>
<feature type="compositionally biased region" description="Basic and acidic residues" evidence="3">
    <location>
        <begin position="153"/>
        <end position="168"/>
    </location>
</feature>
<feature type="compositionally biased region" description="Polar residues" evidence="3">
    <location>
        <begin position="199"/>
        <end position="211"/>
    </location>
</feature>
<feature type="modified residue" description="N-acetylserine" evidence="13">
    <location>
        <position position="2"/>
    </location>
</feature>
<feature type="modified residue" description="Phosphoserine" evidence="16 17">
    <location>
        <position position="106"/>
    </location>
</feature>
<feature type="mutagenesis site" description="Disrupts binding to FFAT motif and causes OPI1 mislocalization." evidence="7">
    <original>K</original>
    <variation>N</variation>
    <location>
        <position position="40"/>
    </location>
</feature>
<feature type="mutagenesis site" description="Disrupts binding to FFAT motif and causes OPI1 mislocalization." evidence="7">
    <original>TT</original>
    <variation>AA</variation>
    <location>
        <begin position="41"/>
        <end position="42"/>
    </location>
</feature>
<feature type="mutagenesis site" description="Disrupts binding to FFAT motif; when associated with D-86." evidence="8">
    <original>K</original>
    <variation>D</variation>
    <location>
        <position position="84"/>
    </location>
</feature>
<feature type="mutagenesis site" description="Disrupts binding to FFAT motif; when associated with D-84." evidence="8">
    <original>L</original>
    <variation>D</variation>
    <location>
        <position position="86"/>
    </location>
</feature>
<feature type="mutagenesis site" description="Reduces binding to FFAT motif and impairs OPI1 function." evidence="7">
    <original>K</original>
    <variation>N</variation>
    <location>
        <position position="120"/>
    </location>
</feature>
<feature type="strand" evidence="18">
    <location>
        <begin position="4"/>
        <end position="7"/>
    </location>
</feature>
<feature type="strand" evidence="18">
    <location>
        <begin position="9"/>
        <end position="15"/>
    </location>
</feature>
<feature type="strand" evidence="18">
    <location>
        <begin position="21"/>
        <end position="29"/>
    </location>
</feature>
<feature type="strand" evidence="18">
    <location>
        <begin position="31"/>
        <end position="33"/>
    </location>
</feature>
<feature type="strand" evidence="18">
    <location>
        <begin position="35"/>
        <end position="42"/>
    </location>
</feature>
<feature type="turn" evidence="18">
    <location>
        <begin position="44"/>
        <end position="46"/>
    </location>
</feature>
<feature type="strand" evidence="18">
    <location>
        <begin position="47"/>
        <end position="56"/>
    </location>
</feature>
<feature type="strand" evidence="18">
    <location>
        <begin position="61"/>
        <end position="68"/>
    </location>
</feature>
<feature type="strand" evidence="18">
    <location>
        <begin position="84"/>
        <end position="91"/>
    </location>
</feature>
<feature type="helix" evidence="18">
    <location>
        <begin position="101"/>
        <end position="112"/>
    </location>
</feature>
<feature type="helix" evidence="18">
    <location>
        <begin position="113"/>
        <end position="115"/>
    </location>
</feature>
<feature type="strand" evidence="18">
    <location>
        <begin position="117"/>
        <end position="126"/>
    </location>
</feature>
<organism>
    <name type="scientific">Saccharomyces cerevisiae (strain ATCC 204508 / S288c)</name>
    <name type="common">Baker's yeast</name>
    <dbReference type="NCBI Taxonomy" id="559292"/>
    <lineage>
        <taxon>Eukaryota</taxon>
        <taxon>Fungi</taxon>
        <taxon>Dikarya</taxon>
        <taxon>Ascomycota</taxon>
        <taxon>Saccharomycotina</taxon>
        <taxon>Saccharomycetes</taxon>
        <taxon>Saccharomycetales</taxon>
        <taxon>Saccharomycetaceae</taxon>
        <taxon>Saccharomyces</taxon>
    </lineage>
</organism>
<protein>
    <recommendedName>
        <fullName evidence="14">Vesicle-associated membrane protein-associated protein SCS2</fullName>
        <shortName evidence="14">VAMP-associated protein SCS2</shortName>
    </recommendedName>
    <alternativeName>
        <fullName>Choline sensitivity suppressor protein 2</fullName>
    </alternativeName>
    <alternativeName>
        <fullName>VAP homolog 1</fullName>
    </alternativeName>
</protein>
<keyword id="KW-0002">3D-structure</keyword>
<keyword id="KW-0007">Acetylation</keyword>
<keyword id="KW-0903">Direct protein sequencing</keyword>
<keyword id="KW-0256">Endoplasmic reticulum</keyword>
<keyword id="KW-0472">Membrane</keyword>
<keyword id="KW-0539">Nucleus</keyword>
<keyword id="KW-0597">Phosphoprotein</keyword>
<keyword id="KW-1185">Reference proteome</keyword>
<keyword id="KW-0812">Transmembrane</keyword>
<keyword id="KW-1133">Transmembrane helix</keyword>
<comment type="function">
    <text evidence="4 7 9 10 11">Acts as an endoplasmic reticulum (ER) membrane anchor for cytoplasmic proteins via binding to the FFAT motif of targeted proteins (PubMed:12727870, PubMed:15668246, PubMed:25083872). Regulates phospholipid biosynthesis by modulating the subcellular localization of the transcriptional repressor OPI1 (PubMed:12727870). Also contributes to the tethering of the ER to the plasma membrane (PubMed:23237950). Allows interorganelle phosphatidylserine (PtdSer) transport via a process that involves the acceptor membrane complex PDR17-PDS2 that binds to PBI1 which in turn ligates to SCS2 and phosphatidic acid present in the donor membrane, forming a zone of apposition that facilitates PtdSer transfer (PubMed:24366873).</text>
</comment>
<comment type="subunit">
    <text evidence="4 6 10 12">Interacts with OPI1 (PubMed:12727870, PubMed:15455074). Also interacts with PBI1 (PubMed:24366873). Interacts with EPO1 (PubMed:33917059).</text>
</comment>
<comment type="interaction">
    <interactant intactId="EBI-16735">
        <id>P40075</id>
    </interactant>
    <interactant intactId="EBI-12386">
        <id>Q00402</id>
        <label>NUM1</label>
    </interactant>
    <organismsDiffer>false</organismsDiffer>
    <experiments>4</experiments>
</comment>
<comment type="interaction">
    <interactant intactId="EBI-16735">
        <id>P40075</id>
    </interactant>
    <interactant intactId="EBI-12555">
        <id>P21957</id>
        <label>OPI1</label>
    </interactant>
    <organismsDiffer>false</organismsDiffer>
    <experiments>4</experiments>
</comment>
<comment type="interaction">
    <interactant intactId="EBI-16735">
        <id>P40075</id>
    </interactant>
    <interactant intactId="EBI-12630">
        <id>P38713</id>
        <label>OSH3</label>
    </interactant>
    <organismsDiffer>false</organismsDiffer>
    <experiments>2</experiments>
</comment>
<comment type="interaction">
    <interactant intactId="EBI-16735">
        <id>P40075</id>
    </interactant>
    <interactant intactId="EBI-22083">
        <id>Q07657</id>
        <label>SHS1</label>
    </interactant>
    <organismsDiffer>false</organismsDiffer>
    <experiments>4</experiments>
</comment>
<comment type="interaction">
    <interactant intactId="EBI-16735">
        <id>P40075</id>
    </interactant>
    <interactant intactId="EBI-12611">
        <id>P35845</id>
        <label>SWH1</label>
    </interactant>
    <organismsDiffer>false</organismsDiffer>
    <experiments>3</experiments>
</comment>
<comment type="interaction">
    <interactant intactId="EBI-16735">
        <id>P40075</id>
    </interactant>
    <interactant intactId="EBI-27256">
        <id>P39523</id>
        <label>YMR124W</label>
    </interactant>
    <organismsDiffer>false</organismsDiffer>
    <experiments>4</experiments>
</comment>
<comment type="subcellular location">
    <subcellularLocation>
        <location>Endoplasmic reticulum membrane</location>
        <topology>Single-pass type IV membrane protein</topology>
    </subcellularLocation>
    <subcellularLocation>
        <location>Nucleus membrane</location>
        <topology>Single-pass type IV membrane protein</topology>
    </subcellularLocation>
</comment>
<comment type="domain">
    <text evidence="4 12">The MSP domain is required for binding to the FFAT motif of target proteins.</text>
</comment>
<comment type="miscellaneous">
    <text evidence="5">Present with 3497 molecules/cell in log phase SD medium.</text>
</comment>
<comment type="similarity">
    <text evidence="15">Belongs to the VAMP-associated protein (VAP) (TC 9.B.17) family.</text>
</comment>
<reference key="1">
    <citation type="journal article" date="1995" name="J. Biochem.">
        <title>Cloning and sequence of the SCS2 gene, which can suppress the defect of INO1 expression in an inositol auxotrophic mutant of Saccharomyces cerevisiae.</title>
        <authorList>
            <person name="Nikawa J."/>
            <person name="Murakami A."/>
            <person name="Esumi E."/>
            <person name="Hosaka K."/>
        </authorList>
    </citation>
    <scope>NUCLEOTIDE SEQUENCE [GENOMIC DNA]</scope>
</reference>
<reference key="2">
    <citation type="journal article" date="1997" name="Nature">
        <title>The nucleotide sequence of Saccharomyces cerevisiae chromosome V.</title>
        <authorList>
            <person name="Dietrich F.S."/>
            <person name="Mulligan J.T."/>
            <person name="Hennessy K.M."/>
            <person name="Yelton M.A."/>
            <person name="Allen E."/>
            <person name="Araujo R."/>
            <person name="Aviles E."/>
            <person name="Berno A."/>
            <person name="Brennan T."/>
            <person name="Carpenter J."/>
            <person name="Chen E."/>
            <person name="Cherry J.M."/>
            <person name="Chung E."/>
            <person name="Duncan M."/>
            <person name="Guzman E."/>
            <person name="Hartzell G."/>
            <person name="Hunicke-Smith S."/>
            <person name="Hyman R.W."/>
            <person name="Kayser A."/>
            <person name="Komp C."/>
            <person name="Lashkari D."/>
            <person name="Lew H."/>
            <person name="Lin D."/>
            <person name="Mosedale D."/>
            <person name="Nakahara K."/>
            <person name="Namath A."/>
            <person name="Norgren R."/>
            <person name="Oefner P."/>
            <person name="Oh C."/>
            <person name="Petel F.X."/>
            <person name="Roberts D."/>
            <person name="Sehl P."/>
            <person name="Schramm S."/>
            <person name="Shogren T."/>
            <person name="Smith V."/>
            <person name="Taylor P."/>
            <person name="Wei Y."/>
            <person name="Botstein D."/>
            <person name="Davis R.W."/>
        </authorList>
    </citation>
    <scope>NUCLEOTIDE SEQUENCE [LARGE SCALE GENOMIC DNA]</scope>
    <source>
        <strain>ATCC 204508 / S288c</strain>
    </source>
</reference>
<reference key="3">
    <citation type="journal article" date="2014" name="G3 (Bethesda)">
        <title>The reference genome sequence of Saccharomyces cerevisiae: Then and now.</title>
        <authorList>
            <person name="Engel S.R."/>
            <person name="Dietrich F.S."/>
            <person name="Fisk D.G."/>
            <person name="Binkley G."/>
            <person name="Balakrishnan R."/>
            <person name="Costanzo M.C."/>
            <person name="Dwight S.S."/>
            <person name="Hitz B.C."/>
            <person name="Karra K."/>
            <person name="Nash R.S."/>
            <person name="Weng S."/>
            <person name="Wong E.D."/>
            <person name="Lloyd P."/>
            <person name="Skrzypek M.S."/>
            <person name="Miyasato S.R."/>
            <person name="Simison M."/>
            <person name="Cherry J.M."/>
        </authorList>
    </citation>
    <scope>GENOME REANNOTATION</scope>
    <source>
        <strain>ATCC 204508 / S288c</strain>
    </source>
</reference>
<reference key="4">
    <citation type="journal article" date="2007" name="Genome Res.">
        <title>Approaching a complete repository of sequence-verified protein-encoding clones for Saccharomyces cerevisiae.</title>
        <authorList>
            <person name="Hu Y."/>
            <person name="Rolfs A."/>
            <person name="Bhullar B."/>
            <person name="Murthy T.V.S."/>
            <person name="Zhu C."/>
            <person name="Berger M.F."/>
            <person name="Camargo A.A."/>
            <person name="Kelley F."/>
            <person name="McCarron S."/>
            <person name="Jepson D."/>
            <person name="Richardson A."/>
            <person name="Raphael J."/>
            <person name="Moreira D."/>
            <person name="Taycher E."/>
            <person name="Zuo D."/>
            <person name="Mohr S."/>
            <person name="Kane M.F."/>
            <person name="Williamson J."/>
            <person name="Simpson A.J.G."/>
            <person name="Bulyk M.L."/>
            <person name="Harlow E."/>
            <person name="Marsischky G."/>
            <person name="Kolodner R.D."/>
            <person name="LaBaer J."/>
        </authorList>
    </citation>
    <scope>NUCLEOTIDE SEQUENCE [GENOMIC DNA]</scope>
    <source>
        <strain>ATCC 204508 / S288c</strain>
    </source>
</reference>
<reference key="5">
    <citation type="submission" date="2005-06" db="UniProtKB">
        <authorList>
            <person name="Bienvenut W.V."/>
            <person name="Peters C."/>
        </authorList>
    </citation>
    <scope>PROTEIN SEQUENCE OF 2-14; 85-113; 144-156 AND 166-180</scope>
    <scope>CLEAVAGE OF INITIATOR METHIONINE</scope>
    <scope>ACETYLATION AT SER-2</scope>
    <scope>IDENTIFICATION BY MASS SPECTROMETRY</scope>
</reference>
<reference key="6">
    <citation type="journal article" date="1998" name="J. Bacteriol.">
        <title>The Saccharomyces cerevisiae SCS2 gene product, a homolog of a synaptobrevin-associated protein, is an integral membrane protein of the endoplasmic reticulum and is required for inositol metabolism.</title>
        <authorList>
            <person name="Kagiwada S."/>
            <person name="Hosaka K."/>
            <person name="Murata M."/>
            <person name="Nikawa J."/>
            <person name="Takatsuki A."/>
        </authorList>
    </citation>
    <scope>TOPOLOGY</scope>
    <scope>SUBCELLULAR LOCATION</scope>
</reference>
<reference key="7">
    <citation type="journal article" date="2003" name="EMBO J.">
        <title>A conserved ER targeting motif in three families of lipid binding proteins and in Opi1p binds VAP.</title>
        <authorList>
            <person name="Loewen C.J.R."/>
            <person name="Roy A."/>
            <person name="Levine T.P."/>
        </authorList>
    </citation>
    <scope>FUNCTION</scope>
    <scope>INTERACTION WITH OPI1</scope>
    <scope>SUBCELLULAR LOCATION</scope>
    <scope>DOMAIN</scope>
</reference>
<reference key="8">
    <citation type="journal article" date="2003" name="Nature">
        <title>Global analysis of protein localization in budding yeast.</title>
        <authorList>
            <person name="Huh W.-K."/>
            <person name="Falvo J.V."/>
            <person name="Gerke L.C."/>
            <person name="Carroll A.S."/>
            <person name="Howson R.W."/>
            <person name="Weissman J.S."/>
            <person name="O'Shea E.K."/>
        </authorList>
    </citation>
    <scope>SUBCELLULAR LOCATION [LARGE SCALE ANALYSIS]</scope>
</reference>
<reference key="9">
    <citation type="journal article" date="2003" name="Nature">
        <title>Global analysis of protein expression in yeast.</title>
        <authorList>
            <person name="Ghaemmaghami S."/>
            <person name="Huh W.-K."/>
            <person name="Bower K."/>
            <person name="Howson R.W."/>
            <person name="Belle A."/>
            <person name="Dephoure N."/>
            <person name="O'Shea E.K."/>
            <person name="Weissman J.S."/>
        </authorList>
    </citation>
    <scope>LEVEL OF PROTEIN EXPRESSION [LARGE SCALE ANALYSIS]</scope>
</reference>
<reference key="10">
    <citation type="journal article" date="2004" name="PLoS Biol.">
        <title>Gene recruitment of the activated INO1 locus to the nuclear membrane.</title>
        <authorList>
            <person name="Brickner J.H."/>
            <person name="Walter P."/>
        </authorList>
    </citation>
    <scope>INTERACTION WITH OPI1</scope>
    <scope>SUBCELLULAR LOCATION</scope>
</reference>
<reference key="11">
    <citation type="journal article" date="2005" name="J. Biol. Chem.">
        <title>A highly conserved binding site in vesicle-associated membrane protein-associated protein (VAP) for the FFAT motif of lipid-binding proteins.</title>
        <authorList>
            <person name="Loewen C.J.R."/>
            <person name="Levine T.P."/>
        </authorList>
    </citation>
    <scope>FUNCTION</scope>
    <scope>MUTAGENESIS OF LYS-40; 41-THR-THR-42 AND LYS-120</scope>
</reference>
<reference key="12">
    <citation type="journal article" date="2005" name="Mol. Cell. Proteomics">
        <title>Quantitative phosphoproteomics applied to the yeast pheromone signaling pathway.</title>
        <authorList>
            <person name="Gruhler A."/>
            <person name="Olsen J.V."/>
            <person name="Mohammed S."/>
            <person name="Mortensen P."/>
            <person name="Faergeman N.J."/>
            <person name="Mann M."/>
            <person name="Jensen O.N."/>
        </authorList>
    </citation>
    <scope>PHOSPHORYLATION [LARGE SCALE ANALYSIS] AT SER-106</scope>
    <scope>IDENTIFICATION BY MASS SPECTROMETRY [LARGE SCALE ANALYSIS]</scope>
    <source>
        <strain>YAL6B</strain>
    </source>
</reference>
<reference key="13">
    <citation type="journal article" date="2005" name="Structure">
        <title>Structural basis of FFAT motif-mediated ER targeting.</title>
        <authorList>
            <person name="Kaiser S.E."/>
            <person name="Brickner J.H."/>
            <person name="Reilein A.R."/>
            <person name="Fenn T.D."/>
            <person name="Walter P."/>
            <person name="Brunger A.T."/>
        </authorList>
    </citation>
    <scope>FFAT MOTIF-BINDING</scope>
    <scope>MUTAGENESIS OF LYS-84 AND LEU-86</scope>
</reference>
<reference key="14">
    <citation type="journal article" date="2009" name="Science">
        <title>Global analysis of Cdk1 substrate phosphorylation sites provides insights into evolution.</title>
        <authorList>
            <person name="Holt L.J."/>
            <person name="Tuch B.B."/>
            <person name="Villen J."/>
            <person name="Johnson A.D."/>
            <person name="Gygi S.P."/>
            <person name="Morgan D.O."/>
        </authorList>
    </citation>
    <scope>PHOSPHORYLATION [LARGE SCALE ANALYSIS] AT SER-106</scope>
    <scope>IDENTIFICATION BY MASS SPECTROMETRY [LARGE SCALE ANALYSIS]</scope>
</reference>
<reference key="15">
    <citation type="journal article" date="2012" name="Dev. Cell">
        <title>ER-to-plasma membrane tethering proteins regulate cell signaling and ER morphology.</title>
        <authorList>
            <person name="Manford A.G."/>
            <person name="Stefan C.J."/>
            <person name="Yuan H.L."/>
            <person name="Macgurn J.A."/>
            <person name="Emr S.D."/>
        </authorList>
    </citation>
    <scope>FUNCTION</scope>
</reference>
<reference key="16">
    <citation type="journal article" date="2014" name="Cell">
        <title>Polarization of the endoplasmic reticulum by ER-septin tethering.</title>
        <authorList>
            <person name="Chao J.T."/>
            <person name="Wong A.K."/>
            <person name="Tavassoli S."/>
            <person name="Young B.P."/>
            <person name="Chruscicki A."/>
            <person name="Fang N.N."/>
            <person name="Howe L.J."/>
            <person name="Mayor T."/>
            <person name="Foster L.J."/>
            <person name="Loewen C.J."/>
        </authorList>
    </citation>
    <scope>FUNCTION</scope>
</reference>
<reference key="17">
    <citation type="journal article" date="2014" name="J. Biol. Chem.">
        <title>An assembly of proteins and lipid domains regulates transport of phosphatidylserine to phosphatidylserine decarboxylase 2 in Saccharomyces cerevisiae.</title>
        <authorList>
            <person name="Riekhof W.R."/>
            <person name="Wu W.I."/>
            <person name="Jones J.L."/>
            <person name="Nikrad M."/>
            <person name="Chan M.M."/>
            <person name="Loewen C.J."/>
            <person name="Voelker D.R."/>
        </authorList>
    </citation>
    <scope>FUNCTION</scope>
    <scope>INTERACTION WITH PBI1</scope>
</reference>
<reference key="18">
    <citation type="journal article" date="2021" name="Int. J. Mol. Sci.">
        <title>Crystal Structure of the Epo1-Bem3 Complex for Bud Growth.</title>
        <authorList>
            <person name="Wang J."/>
            <person name="Li L."/>
            <person name="Ming Z."/>
            <person name="Wu L."/>
            <person name="Yan L."/>
        </authorList>
    </citation>
    <scope>X-RAY CRYSTALLOGRAPHY (2.05 ANGSTROMS) OF 1-128</scope>
    <scope>INTERACTION WITH EPO1</scope>
    <scope>DOMAIN</scope>
</reference>
<proteinExistence type="evidence at protein level"/>
<sequence length="244" mass="26926">MSAVEISPDVLVYKSPLTEQSTEYASISNNSDQTIAFKVKTTAPKFYCVRPNAAVVAPGETIQVQVIFLGLTEEPAADFKCRDKFLVITLPSPYDLNGKAVADVWSDLEAEFKQQAISKKIKVKYLISPDVHPAQNQNIQENKETVEPVVQDSEPKEVPAVVNEKEVPAEPETQPPVQVKKEEVPPVVQKTVPHENEKQTSNSTPAPQNQIKEAATVPAENESSSMGIFILVALLILVLGWFYR</sequence>
<dbReference type="EMBL" id="D44493">
    <property type="protein sequence ID" value="BAA07936.1"/>
    <property type="molecule type" value="Genomic_DNA"/>
</dbReference>
<dbReference type="EMBL" id="U18916">
    <property type="protein sequence ID" value="AAC03218.1"/>
    <property type="molecule type" value="Genomic_DNA"/>
</dbReference>
<dbReference type="EMBL" id="AY693125">
    <property type="protein sequence ID" value="AAT93144.1"/>
    <property type="molecule type" value="Genomic_DNA"/>
</dbReference>
<dbReference type="EMBL" id="BK006939">
    <property type="protein sequence ID" value="DAA07780.1"/>
    <property type="molecule type" value="Genomic_DNA"/>
</dbReference>
<dbReference type="PIR" id="S50623">
    <property type="entry name" value="S50623"/>
</dbReference>
<dbReference type="RefSeq" id="NP_011046.3">
    <property type="nucleotide sequence ID" value="NM_001179010.3"/>
</dbReference>
<dbReference type="PDB" id="6LP4">
    <property type="method" value="X-ray"/>
    <property type="resolution" value="2.05 A"/>
    <property type="chains" value="A=1-128"/>
</dbReference>
<dbReference type="PDB" id="8HQU">
    <property type="method" value="X-ray"/>
    <property type="resolution" value="2.00 A"/>
    <property type="chains" value="A=1-126"/>
</dbReference>
<dbReference type="PDB" id="8HS7">
    <property type="method" value="X-ray"/>
    <property type="resolution" value="2.00 A"/>
    <property type="chains" value="A=1-126"/>
</dbReference>
<dbReference type="PDBsum" id="6LP4"/>
<dbReference type="PDBsum" id="8HQU"/>
<dbReference type="PDBsum" id="8HS7"/>
<dbReference type="SMR" id="P40075"/>
<dbReference type="BioGRID" id="36865">
    <property type="interactions" value="387"/>
</dbReference>
<dbReference type="DIP" id="DIP-2272N"/>
<dbReference type="FunCoup" id="P40075">
    <property type="interactions" value="656"/>
</dbReference>
<dbReference type="IntAct" id="P40075">
    <property type="interactions" value="61"/>
</dbReference>
<dbReference type="MINT" id="P40075"/>
<dbReference type="STRING" id="4932.YER120W"/>
<dbReference type="iPTMnet" id="P40075"/>
<dbReference type="PaxDb" id="4932-YER120W"/>
<dbReference type="PeptideAtlas" id="P40075"/>
<dbReference type="EnsemblFungi" id="YER120W_mRNA">
    <property type="protein sequence ID" value="YER120W"/>
    <property type="gene ID" value="YER120W"/>
</dbReference>
<dbReference type="GeneID" id="856856"/>
<dbReference type="KEGG" id="sce:YER120W"/>
<dbReference type="AGR" id="SGD:S000000922"/>
<dbReference type="SGD" id="S000000922">
    <property type="gene designation" value="SCS2"/>
</dbReference>
<dbReference type="VEuPathDB" id="FungiDB:YER120W"/>
<dbReference type="eggNOG" id="KOG0439">
    <property type="taxonomic scope" value="Eukaryota"/>
</dbReference>
<dbReference type="GeneTree" id="ENSGT00940000172509"/>
<dbReference type="HOGENOM" id="CLU_072622_1_0_1"/>
<dbReference type="InParanoid" id="P40075"/>
<dbReference type="OMA" id="EDPPADY"/>
<dbReference type="OrthoDB" id="264603at2759"/>
<dbReference type="BioCyc" id="YEAST:G3O-30284-MONOMER"/>
<dbReference type="Reactome" id="R-SCE-6798695">
    <property type="pathway name" value="Neutrophil degranulation"/>
</dbReference>
<dbReference type="Reactome" id="R-SCE-9013106">
    <property type="pathway name" value="RHOC GTPase cycle"/>
</dbReference>
<dbReference type="Reactome" id="R-SCE-9609523">
    <property type="pathway name" value="Insertion of tail-anchored proteins into the endoplasmic reticulum membrane"/>
</dbReference>
<dbReference type="BioGRID-ORCS" id="856856">
    <property type="hits" value="6 hits in 10 CRISPR screens"/>
</dbReference>
<dbReference type="PRO" id="PR:P40075"/>
<dbReference type="Proteomes" id="UP000002311">
    <property type="component" value="Chromosome V"/>
</dbReference>
<dbReference type="RNAct" id="P40075">
    <property type="molecule type" value="protein"/>
</dbReference>
<dbReference type="GO" id="GO:0005935">
    <property type="term" value="C:cellular bud neck"/>
    <property type="evidence" value="ECO:0000353"/>
    <property type="project" value="SGD"/>
</dbReference>
<dbReference type="GO" id="GO:0005934">
    <property type="term" value="C:cellular bud tip"/>
    <property type="evidence" value="ECO:0000314"/>
    <property type="project" value="SGD"/>
</dbReference>
<dbReference type="GO" id="GO:0000781">
    <property type="term" value="C:chromosome, telomeric region"/>
    <property type="evidence" value="ECO:0007669"/>
    <property type="project" value="GOC"/>
</dbReference>
<dbReference type="GO" id="GO:0005783">
    <property type="term" value="C:endoplasmic reticulum"/>
    <property type="evidence" value="ECO:0000314"/>
    <property type="project" value="SGD"/>
</dbReference>
<dbReference type="GO" id="GO:0005789">
    <property type="term" value="C:endoplasmic reticulum membrane"/>
    <property type="evidence" value="ECO:0000314"/>
    <property type="project" value="SGD"/>
</dbReference>
<dbReference type="GO" id="GO:0005635">
    <property type="term" value="C:nuclear envelope"/>
    <property type="evidence" value="ECO:0000314"/>
    <property type="project" value="SGD"/>
</dbReference>
<dbReference type="GO" id="GO:0031965">
    <property type="term" value="C:nuclear membrane"/>
    <property type="evidence" value="ECO:0000314"/>
    <property type="project" value="SGD"/>
</dbReference>
<dbReference type="GO" id="GO:0071561">
    <property type="term" value="C:nucleus-vacuole junction"/>
    <property type="evidence" value="ECO:0000314"/>
    <property type="project" value="SGD"/>
</dbReference>
<dbReference type="GO" id="GO:0005886">
    <property type="term" value="C:plasma membrane"/>
    <property type="evidence" value="ECO:0000314"/>
    <property type="project" value="SGD"/>
</dbReference>
<dbReference type="GO" id="GO:0033149">
    <property type="term" value="F:FFAT motif binding"/>
    <property type="evidence" value="ECO:0000315"/>
    <property type="project" value="SGD"/>
</dbReference>
<dbReference type="GO" id="GO:0035091">
    <property type="term" value="F:phosphatidylinositol binding"/>
    <property type="evidence" value="ECO:0000314"/>
    <property type="project" value="SGD"/>
</dbReference>
<dbReference type="GO" id="GO:0043495">
    <property type="term" value="F:protein-membrane adaptor activity"/>
    <property type="evidence" value="ECO:0000318"/>
    <property type="project" value="GO_Central"/>
</dbReference>
<dbReference type="GO" id="GO:0048309">
    <property type="term" value="P:endoplasmic reticulum inheritance"/>
    <property type="evidence" value="ECO:0000315"/>
    <property type="project" value="SGD"/>
</dbReference>
<dbReference type="GO" id="GO:0090158">
    <property type="term" value="P:endoplasmic reticulum membrane organization"/>
    <property type="evidence" value="ECO:0000316"/>
    <property type="project" value="SGD"/>
</dbReference>
<dbReference type="GO" id="GO:0061163">
    <property type="term" value="P:endoplasmic reticulum polarization"/>
    <property type="evidence" value="ECO:0000314"/>
    <property type="project" value="SGD"/>
</dbReference>
<dbReference type="GO" id="GO:0061817">
    <property type="term" value="P:endoplasmic reticulum-plasma membrane tethering"/>
    <property type="evidence" value="ECO:0000318"/>
    <property type="project" value="GO_Central"/>
</dbReference>
<dbReference type="GO" id="GO:0042308">
    <property type="term" value="P:negative regulation of protein import into nucleus"/>
    <property type="evidence" value="ECO:0000315"/>
    <property type="project" value="SGD"/>
</dbReference>
<dbReference type="GO" id="GO:0008654">
    <property type="term" value="P:phospholipid biosynthetic process"/>
    <property type="evidence" value="ECO:0000315"/>
    <property type="project" value="SGD"/>
</dbReference>
<dbReference type="GO" id="GO:0032377">
    <property type="term" value="P:regulation of intracellular lipid transport"/>
    <property type="evidence" value="ECO:0000315"/>
    <property type="project" value="SGD"/>
</dbReference>
<dbReference type="GO" id="GO:0060304">
    <property type="term" value="P:regulation of phosphatidylinositol dephosphorylation"/>
    <property type="evidence" value="ECO:0000316"/>
    <property type="project" value="SGD"/>
</dbReference>
<dbReference type="GO" id="GO:0061709">
    <property type="term" value="P:reticulophagy"/>
    <property type="evidence" value="ECO:0000316"/>
    <property type="project" value="SGD"/>
</dbReference>
<dbReference type="GO" id="GO:0031509">
    <property type="term" value="P:subtelomeric heterochromatin formation"/>
    <property type="evidence" value="ECO:0000315"/>
    <property type="project" value="SGD"/>
</dbReference>
<dbReference type="Gene3D" id="2.60.40.10">
    <property type="entry name" value="Immunoglobulins"/>
    <property type="match status" value="1"/>
</dbReference>
<dbReference type="InterPro" id="IPR013783">
    <property type="entry name" value="Ig-like_fold"/>
</dbReference>
<dbReference type="InterPro" id="IPR000535">
    <property type="entry name" value="MSP_dom"/>
</dbReference>
<dbReference type="InterPro" id="IPR008962">
    <property type="entry name" value="PapD-like_sf"/>
</dbReference>
<dbReference type="InterPro" id="IPR016763">
    <property type="entry name" value="VAP"/>
</dbReference>
<dbReference type="PANTHER" id="PTHR10809:SF6">
    <property type="entry name" value="AT11025P-RELATED"/>
    <property type="match status" value="1"/>
</dbReference>
<dbReference type="PANTHER" id="PTHR10809">
    <property type="entry name" value="VESICLE-ASSOCIATED MEMBRANE PROTEIN-ASSOCIATED PROTEIN"/>
    <property type="match status" value="1"/>
</dbReference>
<dbReference type="Pfam" id="PF00635">
    <property type="entry name" value="Motile_Sperm"/>
    <property type="match status" value="1"/>
</dbReference>
<dbReference type="PIRSF" id="PIRSF019693">
    <property type="entry name" value="VAMP-associated"/>
    <property type="match status" value="1"/>
</dbReference>
<dbReference type="SUPFAM" id="SSF49354">
    <property type="entry name" value="PapD-like"/>
    <property type="match status" value="1"/>
</dbReference>
<dbReference type="PROSITE" id="PS50202">
    <property type="entry name" value="MSP"/>
    <property type="match status" value="1"/>
</dbReference>
<name>SCS2_YEAST</name>